<dbReference type="ArachnoServer" id="AS000766">
    <property type="toxin name" value="M-zodatoxin-Lt8l"/>
</dbReference>
<dbReference type="GO" id="GO:0005576">
    <property type="term" value="C:extracellular region"/>
    <property type="evidence" value="ECO:0007669"/>
    <property type="project" value="UniProtKB-SubCell"/>
</dbReference>
<dbReference type="GO" id="GO:0090729">
    <property type="term" value="F:toxin activity"/>
    <property type="evidence" value="ECO:0007669"/>
    <property type="project" value="UniProtKB-KW"/>
</dbReference>
<dbReference type="GO" id="GO:0042742">
    <property type="term" value="P:defense response to bacterium"/>
    <property type="evidence" value="ECO:0007669"/>
    <property type="project" value="UniProtKB-KW"/>
</dbReference>
<dbReference type="GO" id="GO:0031640">
    <property type="term" value="P:killing of cells of another organism"/>
    <property type="evidence" value="ECO:0007669"/>
    <property type="project" value="UniProtKB-KW"/>
</dbReference>
<keyword id="KW-0044">Antibiotic</keyword>
<keyword id="KW-0929">Antimicrobial</keyword>
<keyword id="KW-0204">Cytolysis</keyword>
<keyword id="KW-0354">Hemolysis</keyword>
<keyword id="KW-0964">Secreted</keyword>
<keyword id="KW-0732">Signal</keyword>
<keyword id="KW-0800">Toxin</keyword>
<organism>
    <name type="scientific">Lachesana tarabaevi</name>
    <name type="common">Spider</name>
    <dbReference type="NCBI Taxonomy" id="379576"/>
    <lineage>
        <taxon>Eukaryota</taxon>
        <taxon>Metazoa</taxon>
        <taxon>Ecdysozoa</taxon>
        <taxon>Arthropoda</taxon>
        <taxon>Chelicerata</taxon>
        <taxon>Arachnida</taxon>
        <taxon>Araneae</taxon>
        <taxon>Araneomorphae</taxon>
        <taxon>Entelegynae</taxon>
        <taxon>Entelegynae incertae sedis</taxon>
        <taxon>Zodariidae</taxon>
        <taxon>Lachesana</taxon>
    </lineage>
</organism>
<gene>
    <name type="primary">cit 1-12</name>
</gene>
<evidence type="ECO:0000250" key="1"/>
<evidence type="ECO:0000255" key="2"/>
<evidence type="ECO:0000305" key="3"/>
<protein>
    <recommendedName>
        <fullName>M-zodatoxin-Lt8l</fullName>
        <shortName>M-ZDTX-Lt8l</shortName>
    </recommendedName>
    <alternativeName>
        <fullName>Cytoinsectotoxin 1-12</fullName>
    </alternativeName>
</protein>
<name>CT112_LACTA</name>
<comment type="function">
    <text evidence="1">Insecticidal, cytolytic and antimicrobial peptide. Forms voltage-dependent, ion-permeable channels in membranes. At high concentration causes cell membrane lysis (By similarity).</text>
</comment>
<comment type="subcellular location">
    <subcellularLocation>
        <location evidence="1">Secreted</location>
    </subcellularLocation>
</comment>
<comment type="tissue specificity">
    <text>Expressed by the venom gland.</text>
</comment>
<comment type="similarity">
    <text evidence="3">Belongs to the cationic peptide 06 (cytoinsectotoxin) family.</text>
</comment>
<sequence>MKYFVVXXALVAAFACIAESKPAESEHELAEVEEENELADLEDAVWLEDLADLSDLEETRGFFGNAWKKIKGKAEKFFRKKAAKIIAKKEGITKEEAEAKVDPMSKKQIKVYLLKHYGKKALQKASEKL</sequence>
<reference key="1">
    <citation type="journal article" date="2008" name="Biochem. J.">
        <title>Cyto-insectotoxins, a novel class of cytolytic and insecticidal peptides from spider venom.</title>
        <authorList>
            <person name="Vassilevski A.A."/>
            <person name="Kozlov S.A."/>
            <person name="Samsonova O.V."/>
            <person name="Egorova N.S."/>
            <person name="Karpunin D.V."/>
            <person name="Pluzhnikov K.A."/>
            <person name="Feofanov A.V."/>
            <person name="Grishin E.V."/>
        </authorList>
    </citation>
    <scope>NUCLEOTIDE SEQUENCE [MRNA]</scope>
    <source>
        <tissue>Venom gland</tissue>
    </source>
</reference>
<accession>P0CAZ5</accession>
<feature type="signal peptide" evidence="2">
    <location>
        <begin position="1"/>
        <end position="20"/>
    </location>
</feature>
<feature type="propeptide" id="PRO_0000380143" evidence="1">
    <location>
        <begin position="21"/>
        <end position="60"/>
    </location>
</feature>
<feature type="chain" id="PRO_0000380144" description="M-zodatoxin-Lt8l">
    <location>
        <begin position="61"/>
        <end position="129"/>
    </location>
</feature>
<proteinExistence type="evidence at transcript level"/>